<dbReference type="EMBL" id="U00039">
    <property type="protein sequence ID" value="AAB18562.1"/>
    <property type="molecule type" value="Genomic_DNA"/>
</dbReference>
<dbReference type="EMBL" id="U00096">
    <property type="protein sequence ID" value="AAC76609.1"/>
    <property type="molecule type" value="Genomic_DNA"/>
</dbReference>
<dbReference type="EMBL" id="AP009048">
    <property type="protein sequence ID" value="BAE77708.1"/>
    <property type="molecule type" value="Genomic_DNA"/>
</dbReference>
<dbReference type="PIR" id="S47806">
    <property type="entry name" value="S47806"/>
</dbReference>
<dbReference type="RefSeq" id="NP_418042.1">
    <property type="nucleotide sequence ID" value="NC_000913.3"/>
</dbReference>
<dbReference type="RefSeq" id="WP_000164036.1">
    <property type="nucleotide sequence ID" value="NZ_SSZK01000041.1"/>
</dbReference>
<dbReference type="SMR" id="P37682"/>
<dbReference type="BioGRID" id="4262551">
    <property type="interactions" value="126"/>
</dbReference>
<dbReference type="DIP" id="DIP-12411N"/>
<dbReference type="FunCoup" id="P37682">
    <property type="interactions" value="59"/>
</dbReference>
<dbReference type="STRING" id="511145.b3585"/>
<dbReference type="PaxDb" id="511145-b3585"/>
<dbReference type="DNASU" id="948107"/>
<dbReference type="EnsemblBacteria" id="AAC76609">
    <property type="protein sequence ID" value="AAC76609"/>
    <property type="gene ID" value="b3585"/>
</dbReference>
<dbReference type="GeneID" id="948107"/>
<dbReference type="KEGG" id="ecj:JW3557"/>
<dbReference type="KEGG" id="eco:b3585"/>
<dbReference type="KEGG" id="ecoc:C3026_19435"/>
<dbReference type="PATRIC" id="fig|1411691.4.peg.3127"/>
<dbReference type="EchoBASE" id="EB2197"/>
<dbReference type="eggNOG" id="COG0583">
    <property type="taxonomic scope" value="Bacteria"/>
</dbReference>
<dbReference type="HOGENOM" id="CLU_039613_16_2_6"/>
<dbReference type="InParanoid" id="P37682"/>
<dbReference type="OMA" id="CDNTQTA"/>
<dbReference type="OrthoDB" id="6420818at2"/>
<dbReference type="PhylomeDB" id="P37682"/>
<dbReference type="BioCyc" id="EcoCyc:EG12289-MONOMER"/>
<dbReference type="PRO" id="PR:P37682"/>
<dbReference type="Proteomes" id="UP000000625">
    <property type="component" value="Chromosome"/>
</dbReference>
<dbReference type="GO" id="GO:0005829">
    <property type="term" value="C:cytosol"/>
    <property type="evidence" value="ECO:0000318"/>
    <property type="project" value="GO_Central"/>
</dbReference>
<dbReference type="GO" id="GO:0003700">
    <property type="term" value="F:DNA-binding transcription factor activity"/>
    <property type="evidence" value="ECO:0007669"/>
    <property type="project" value="InterPro"/>
</dbReference>
<dbReference type="GO" id="GO:0043565">
    <property type="term" value="F:sequence-specific DNA binding"/>
    <property type="evidence" value="ECO:0000318"/>
    <property type="project" value="GO_Central"/>
</dbReference>
<dbReference type="GO" id="GO:0006355">
    <property type="term" value="P:regulation of DNA-templated transcription"/>
    <property type="evidence" value="ECO:0000318"/>
    <property type="project" value="GO_Central"/>
</dbReference>
<dbReference type="FunFam" id="1.10.10.10:FF:000382">
    <property type="entry name" value="LysR family transcriptional regulator"/>
    <property type="match status" value="1"/>
</dbReference>
<dbReference type="Gene3D" id="3.40.190.290">
    <property type="match status" value="1"/>
</dbReference>
<dbReference type="Gene3D" id="1.10.10.10">
    <property type="entry name" value="Winged helix-like DNA-binding domain superfamily/Winged helix DNA-binding domain"/>
    <property type="match status" value="1"/>
</dbReference>
<dbReference type="InterPro" id="IPR050950">
    <property type="entry name" value="HTH-type_LysR_regulators"/>
</dbReference>
<dbReference type="InterPro" id="IPR005119">
    <property type="entry name" value="LysR_subst-bd"/>
</dbReference>
<dbReference type="InterPro" id="IPR000847">
    <property type="entry name" value="Tscrpt_reg_HTH_LysR"/>
</dbReference>
<dbReference type="InterPro" id="IPR036388">
    <property type="entry name" value="WH-like_DNA-bd_sf"/>
</dbReference>
<dbReference type="InterPro" id="IPR036390">
    <property type="entry name" value="WH_DNA-bd_sf"/>
</dbReference>
<dbReference type="PANTHER" id="PTHR30419">
    <property type="entry name" value="HTH-TYPE TRANSCRIPTIONAL REGULATOR YBHD"/>
    <property type="match status" value="1"/>
</dbReference>
<dbReference type="PANTHER" id="PTHR30419:SF14">
    <property type="entry name" value="LYSR FAMILY TRANSCRIPTIONAL REGULATOR"/>
    <property type="match status" value="1"/>
</dbReference>
<dbReference type="Pfam" id="PF00126">
    <property type="entry name" value="HTH_1"/>
    <property type="match status" value="1"/>
</dbReference>
<dbReference type="Pfam" id="PF03466">
    <property type="entry name" value="LysR_substrate"/>
    <property type="match status" value="1"/>
</dbReference>
<dbReference type="SUPFAM" id="SSF53850">
    <property type="entry name" value="Periplasmic binding protein-like II"/>
    <property type="match status" value="1"/>
</dbReference>
<dbReference type="SUPFAM" id="SSF46785">
    <property type="entry name" value="Winged helix' DNA-binding domain"/>
    <property type="match status" value="1"/>
</dbReference>
<dbReference type="PROSITE" id="PS50931">
    <property type="entry name" value="HTH_LYSR"/>
    <property type="match status" value="1"/>
</dbReference>
<feature type="chain" id="PRO_0000105800" description="Uncharacterized HTH-type transcriptional regulator YiaU">
    <location>
        <begin position="1"/>
        <end position="324"/>
    </location>
</feature>
<feature type="domain" description="HTH lysR-type" evidence="1">
    <location>
        <begin position="6"/>
        <end position="63"/>
    </location>
</feature>
<feature type="DNA-binding region" description="H-T-H motif" evidence="1">
    <location>
        <begin position="23"/>
        <end position="42"/>
    </location>
</feature>
<sequence>MTKLQLKYRELKIISVIAASENISHAATVLGIAQANVSKYLADFESKVGLKVFDRTTRQLMLTPFGTALLPYINDMLDRNEQLNNFIADYKHEKRGRVTIYAPTGIITYLSKHVIDKIKDIGDITLSLKTCNLERNAFYEGVEFPDDCDVLISYAPPKDESLVASFITQYAVTAYASQRYLEKHPISRPDELEHHSCILIDSMMIDDANIWRFNVAGSKEVRDYRVKGNYVCDNTQSALELARNHLGIVFAPDKSVQSDLQDGTLVPCFQQPYEWWLDLVAIFRKREYQPWRVQYVLDEMLREIRHQLAQSQQLRPEQAAESED</sequence>
<reference key="1">
    <citation type="journal article" date="1994" name="Nucleic Acids Res.">
        <title>Analysis of the Escherichia coli genome. V. DNA sequence of the region from 76.0 to 81.5 minutes.</title>
        <authorList>
            <person name="Sofia H.J."/>
            <person name="Burland V."/>
            <person name="Daniels D.L."/>
            <person name="Plunkett G. III"/>
            <person name="Blattner F.R."/>
        </authorList>
    </citation>
    <scope>NUCLEOTIDE SEQUENCE [LARGE SCALE GENOMIC DNA]</scope>
    <source>
        <strain>K12 / MG1655 / ATCC 47076</strain>
    </source>
</reference>
<reference key="2">
    <citation type="journal article" date="1997" name="Science">
        <title>The complete genome sequence of Escherichia coli K-12.</title>
        <authorList>
            <person name="Blattner F.R."/>
            <person name="Plunkett G. III"/>
            <person name="Bloch C.A."/>
            <person name="Perna N.T."/>
            <person name="Burland V."/>
            <person name="Riley M."/>
            <person name="Collado-Vides J."/>
            <person name="Glasner J.D."/>
            <person name="Rode C.K."/>
            <person name="Mayhew G.F."/>
            <person name="Gregor J."/>
            <person name="Davis N.W."/>
            <person name="Kirkpatrick H.A."/>
            <person name="Goeden M.A."/>
            <person name="Rose D.J."/>
            <person name="Mau B."/>
            <person name="Shao Y."/>
        </authorList>
    </citation>
    <scope>NUCLEOTIDE SEQUENCE [LARGE SCALE GENOMIC DNA]</scope>
    <source>
        <strain>K12 / MG1655 / ATCC 47076</strain>
    </source>
</reference>
<reference key="3">
    <citation type="journal article" date="2006" name="Mol. Syst. Biol.">
        <title>Highly accurate genome sequences of Escherichia coli K-12 strains MG1655 and W3110.</title>
        <authorList>
            <person name="Hayashi K."/>
            <person name="Morooka N."/>
            <person name="Yamamoto Y."/>
            <person name="Fujita K."/>
            <person name="Isono K."/>
            <person name="Choi S."/>
            <person name="Ohtsubo E."/>
            <person name="Baba T."/>
            <person name="Wanner B.L."/>
            <person name="Mori H."/>
            <person name="Horiuchi T."/>
        </authorList>
    </citation>
    <scope>NUCLEOTIDE SEQUENCE [LARGE SCALE GENOMIC DNA]</scope>
    <source>
        <strain>K12 / W3110 / ATCC 27325 / DSM 5911</strain>
    </source>
</reference>
<organism>
    <name type="scientific">Escherichia coli (strain K12)</name>
    <dbReference type="NCBI Taxonomy" id="83333"/>
    <lineage>
        <taxon>Bacteria</taxon>
        <taxon>Pseudomonadati</taxon>
        <taxon>Pseudomonadota</taxon>
        <taxon>Gammaproteobacteria</taxon>
        <taxon>Enterobacterales</taxon>
        <taxon>Enterobacteriaceae</taxon>
        <taxon>Escherichia</taxon>
    </lineage>
</organism>
<proteinExistence type="inferred from homology"/>
<gene>
    <name type="primary">yiaU</name>
    <name type="ordered locus">b3585</name>
    <name type="ordered locus">JW3557</name>
</gene>
<name>YIAU_ECOLI</name>
<keyword id="KW-0238">DNA-binding</keyword>
<keyword id="KW-1185">Reference proteome</keyword>
<keyword id="KW-0804">Transcription</keyword>
<keyword id="KW-0805">Transcription regulation</keyword>
<protein>
    <recommendedName>
        <fullName>Uncharacterized HTH-type transcriptional regulator YiaU</fullName>
    </recommendedName>
</protein>
<accession>P37682</accession>
<accession>Q2M7P8</accession>
<evidence type="ECO:0000255" key="1">
    <source>
        <dbReference type="PROSITE-ProRule" id="PRU00253"/>
    </source>
</evidence>
<evidence type="ECO:0000305" key="2"/>
<comment type="similarity">
    <text evidence="2">Belongs to the LysR transcriptional regulatory family.</text>
</comment>